<proteinExistence type="inferred from homology"/>
<name>POTA_VIBCH</name>
<reference key="1">
    <citation type="journal article" date="2000" name="Nature">
        <title>DNA sequence of both chromosomes of the cholera pathogen Vibrio cholerae.</title>
        <authorList>
            <person name="Heidelberg J.F."/>
            <person name="Eisen J.A."/>
            <person name="Nelson W.C."/>
            <person name="Clayton R.A."/>
            <person name="Gwinn M.L."/>
            <person name="Dodson R.J."/>
            <person name="Haft D.H."/>
            <person name="Hickey E.K."/>
            <person name="Peterson J.D."/>
            <person name="Umayam L.A."/>
            <person name="Gill S.R."/>
            <person name="Nelson K.E."/>
            <person name="Read T.D."/>
            <person name="Tettelin H."/>
            <person name="Richardson D.L."/>
            <person name="Ermolaeva M.D."/>
            <person name="Vamathevan J.J."/>
            <person name="Bass S."/>
            <person name="Qin H."/>
            <person name="Dragoi I."/>
            <person name="Sellers P."/>
            <person name="McDonald L.A."/>
            <person name="Utterback T.R."/>
            <person name="Fleischmann R.D."/>
            <person name="Nierman W.C."/>
            <person name="White O."/>
            <person name="Salzberg S.L."/>
            <person name="Smith H.O."/>
            <person name="Colwell R.R."/>
            <person name="Mekalanos J.J."/>
            <person name="Venter J.C."/>
            <person name="Fraser C.M."/>
        </authorList>
    </citation>
    <scope>NUCLEOTIDE SEQUENCE [LARGE SCALE GENOMIC DNA]</scope>
    <source>
        <strain>ATCC 39315 / El Tor Inaba N16961</strain>
    </source>
</reference>
<accession>Q9KS33</accession>
<keyword id="KW-0067">ATP-binding</keyword>
<keyword id="KW-0997">Cell inner membrane</keyword>
<keyword id="KW-1003">Cell membrane</keyword>
<keyword id="KW-0472">Membrane</keyword>
<keyword id="KW-0547">Nucleotide-binding</keyword>
<keyword id="KW-1185">Reference proteome</keyword>
<keyword id="KW-1278">Translocase</keyword>
<keyword id="KW-0813">Transport</keyword>
<protein>
    <recommendedName>
        <fullName evidence="1">Spermidine/putrescine import ATP-binding protein PotA</fullName>
        <ecNumber evidence="1">7.6.2.11</ecNumber>
    </recommendedName>
</protein>
<sequence>MGEIQTLNEQHSVGKPVIRLSGISKSFDGKEIIGNLNLDVNHGEFLTILGPSGCGKTTVLRMIAGFETADQGQILLDDQDVTQVPAEQRHVNTVFQSYALFPHMTVFENVAFGLRMQKVPQSEIEPRVMEALRMVRLAEMAQRKPHQLSGGQQQRIAIARAVVNKPKVLLLDESLSALDYKLRKQMQSELKQLQRQLGITFIFVTHDQEEALSMSDRIIVMRSGKIEQDGSPREIYEDPKNLFVARFIGEINVFQATTIDRIDEKRIRVDIEGIESIVYYEDEVKAGDKLQVLLRPEDLRIEEIKESEEKGIVGHVTDRTYKGMTLESVVELESGMCVMVSEFFNEDDPDVDHSIGQKVAVTWVESWEVVLNDEQKA</sequence>
<organism>
    <name type="scientific">Vibrio cholerae serotype O1 (strain ATCC 39315 / El Tor Inaba N16961)</name>
    <dbReference type="NCBI Taxonomy" id="243277"/>
    <lineage>
        <taxon>Bacteria</taxon>
        <taxon>Pseudomonadati</taxon>
        <taxon>Pseudomonadota</taxon>
        <taxon>Gammaproteobacteria</taxon>
        <taxon>Vibrionales</taxon>
        <taxon>Vibrionaceae</taxon>
        <taxon>Vibrio</taxon>
    </lineage>
</organism>
<feature type="chain" id="PRO_0000286323" description="Spermidine/putrescine import ATP-binding protein PotA">
    <location>
        <begin position="1"/>
        <end position="377"/>
    </location>
</feature>
<feature type="domain" description="ABC transporter" evidence="1">
    <location>
        <begin position="18"/>
        <end position="248"/>
    </location>
</feature>
<feature type="binding site" evidence="1">
    <location>
        <begin position="50"/>
        <end position="57"/>
    </location>
    <ligand>
        <name>ATP</name>
        <dbReference type="ChEBI" id="CHEBI:30616"/>
    </ligand>
</feature>
<gene>
    <name evidence="1" type="primary">potA</name>
    <name type="ordered locus">VC_1428</name>
</gene>
<dbReference type="EC" id="7.6.2.11" evidence="1"/>
<dbReference type="EMBL" id="AE003852">
    <property type="protein sequence ID" value="AAF94585.1"/>
    <property type="molecule type" value="Genomic_DNA"/>
</dbReference>
<dbReference type="PIR" id="F82201">
    <property type="entry name" value="F82201"/>
</dbReference>
<dbReference type="RefSeq" id="NP_231071.1">
    <property type="nucleotide sequence ID" value="NC_002505.1"/>
</dbReference>
<dbReference type="RefSeq" id="WP_001881184.1">
    <property type="nucleotide sequence ID" value="NZ_LT906614.1"/>
</dbReference>
<dbReference type="SMR" id="Q9KS33"/>
<dbReference type="STRING" id="243277.VC_1428"/>
<dbReference type="DNASU" id="2614060"/>
<dbReference type="EnsemblBacteria" id="AAF94585">
    <property type="protein sequence ID" value="AAF94585"/>
    <property type="gene ID" value="VC_1428"/>
</dbReference>
<dbReference type="GeneID" id="69719901"/>
<dbReference type="KEGG" id="vch:VC_1428"/>
<dbReference type="PATRIC" id="fig|243277.26.peg.1358"/>
<dbReference type="eggNOG" id="COG3842">
    <property type="taxonomic scope" value="Bacteria"/>
</dbReference>
<dbReference type="HOGENOM" id="CLU_000604_1_1_6"/>
<dbReference type="Proteomes" id="UP000000584">
    <property type="component" value="Chromosome 1"/>
</dbReference>
<dbReference type="GO" id="GO:0043190">
    <property type="term" value="C:ATP-binding cassette (ABC) transporter complex"/>
    <property type="evidence" value="ECO:0007669"/>
    <property type="project" value="InterPro"/>
</dbReference>
<dbReference type="GO" id="GO:0015594">
    <property type="term" value="F:ABC-type putrescine transporter activity"/>
    <property type="evidence" value="ECO:0007669"/>
    <property type="project" value="InterPro"/>
</dbReference>
<dbReference type="GO" id="GO:0005524">
    <property type="term" value="F:ATP binding"/>
    <property type="evidence" value="ECO:0007669"/>
    <property type="project" value="UniProtKB-KW"/>
</dbReference>
<dbReference type="GO" id="GO:0016887">
    <property type="term" value="F:ATP hydrolysis activity"/>
    <property type="evidence" value="ECO:0007669"/>
    <property type="project" value="InterPro"/>
</dbReference>
<dbReference type="CDD" id="cd03300">
    <property type="entry name" value="ABC_PotA_N"/>
    <property type="match status" value="1"/>
</dbReference>
<dbReference type="FunFam" id="3.40.50.300:FF:000133">
    <property type="entry name" value="Spermidine/putrescine import ATP-binding protein PotA"/>
    <property type="match status" value="1"/>
</dbReference>
<dbReference type="Gene3D" id="2.40.50.100">
    <property type="match status" value="1"/>
</dbReference>
<dbReference type="Gene3D" id="3.40.50.300">
    <property type="entry name" value="P-loop containing nucleotide triphosphate hydrolases"/>
    <property type="match status" value="1"/>
</dbReference>
<dbReference type="InterPro" id="IPR003593">
    <property type="entry name" value="AAA+_ATPase"/>
</dbReference>
<dbReference type="InterPro" id="IPR050093">
    <property type="entry name" value="ABC_SmlMolc_Importer"/>
</dbReference>
<dbReference type="InterPro" id="IPR003439">
    <property type="entry name" value="ABC_transporter-like_ATP-bd"/>
</dbReference>
<dbReference type="InterPro" id="IPR017871">
    <property type="entry name" value="ABC_transporter-like_CS"/>
</dbReference>
<dbReference type="InterPro" id="IPR008995">
    <property type="entry name" value="Mo/tungstate-bd_C_term_dom"/>
</dbReference>
<dbReference type="InterPro" id="IPR027417">
    <property type="entry name" value="P-loop_NTPase"/>
</dbReference>
<dbReference type="InterPro" id="IPR005893">
    <property type="entry name" value="PotA-like"/>
</dbReference>
<dbReference type="InterPro" id="IPR017879">
    <property type="entry name" value="PotA_ATP-bd"/>
</dbReference>
<dbReference type="InterPro" id="IPR013611">
    <property type="entry name" value="Transp-assoc_OB_typ2"/>
</dbReference>
<dbReference type="NCBIfam" id="TIGR01187">
    <property type="entry name" value="potA"/>
    <property type="match status" value="1"/>
</dbReference>
<dbReference type="NCBIfam" id="NF006987">
    <property type="entry name" value="PRK09452.1"/>
    <property type="match status" value="1"/>
</dbReference>
<dbReference type="PANTHER" id="PTHR42781">
    <property type="entry name" value="SPERMIDINE/PUTRESCINE IMPORT ATP-BINDING PROTEIN POTA"/>
    <property type="match status" value="1"/>
</dbReference>
<dbReference type="PANTHER" id="PTHR42781:SF4">
    <property type="entry name" value="SPERMIDINE_PUTRESCINE IMPORT ATP-BINDING PROTEIN POTA"/>
    <property type="match status" value="1"/>
</dbReference>
<dbReference type="Pfam" id="PF00005">
    <property type="entry name" value="ABC_tran"/>
    <property type="match status" value="1"/>
</dbReference>
<dbReference type="Pfam" id="PF08402">
    <property type="entry name" value="TOBE_2"/>
    <property type="match status" value="1"/>
</dbReference>
<dbReference type="SMART" id="SM00382">
    <property type="entry name" value="AAA"/>
    <property type="match status" value="1"/>
</dbReference>
<dbReference type="SUPFAM" id="SSF50331">
    <property type="entry name" value="MOP-like"/>
    <property type="match status" value="1"/>
</dbReference>
<dbReference type="SUPFAM" id="SSF52540">
    <property type="entry name" value="P-loop containing nucleoside triphosphate hydrolases"/>
    <property type="match status" value="1"/>
</dbReference>
<dbReference type="PROSITE" id="PS00211">
    <property type="entry name" value="ABC_TRANSPORTER_1"/>
    <property type="match status" value="1"/>
</dbReference>
<dbReference type="PROSITE" id="PS50893">
    <property type="entry name" value="ABC_TRANSPORTER_2"/>
    <property type="match status" value="1"/>
</dbReference>
<dbReference type="PROSITE" id="PS51305">
    <property type="entry name" value="POTA"/>
    <property type="match status" value="1"/>
</dbReference>
<evidence type="ECO:0000255" key="1">
    <source>
        <dbReference type="HAMAP-Rule" id="MF_01726"/>
    </source>
</evidence>
<comment type="function">
    <text evidence="1">Part of the ABC transporter complex PotABCD involved in spermidine/putrescine import. Responsible for energy coupling to the transport system.</text>
</comment>
<comment type="catalytic activity">
    <reaction evidence="1">
        <text>ATP + H2O + polyamine-[polyamine-binding protein]Side 1 = ADP + phosphate + polyamineSide 2 + [polyamine-binding protein]Side 1.</text>
        <dbReference type="EC" id="7.6.2.11"/>
    </reaction>
</comment>
<comment type="subunit">
    <text evidence="1">The complex is composed of two ATP-binding proteins (PotA), two transmembrane proteins (PotB and PotC) and a solute-binding protein (PotD).</text>
</comment>
<comment type="subcellular location">
    <subcellularLocation>
        <location evidence="1">Cell inner membrane</location>
        <topology evidence="1">Peripheral membrane protein</topology>
    </subcellularLocation>
</comment>
<comment type="similarity">
    <text evidence="1">Belongs to the ABC transporter superfamily. Spermidine/putrescine importer (TC 3.A.1.11.1) family.</text>
</comment>